<dbReference type="EC" id="7.2.1.1" evidence="1"/>
<dbReference type="EMBL" id="CP000057">
    <property type="protein sequence ID" value="AAX87227.1"/>
    <property type="molecule type" value="Genomic_DNA"/>
</dbReference>
<dbReference type="RefSeq" id="WP_005631374.1">
    <property type="nucleotide sequence ID" value="NC_007146.2"/>
</dbReference>
<dbReference type="SMR" id="Q4QP20"/>
<dbReference type="GeneID" id="93219105"/>
<dbReference type="KEGG" id="hit:NTHI0258"/>
<dbReference type="HOGENOM" id="CLU_095255_0_0_6"/>
<dbReference type="Proteomes" id="UP000002525">
    <property type="component" value="Chromosome"/>
</dbReference>
<dbReference type="GO" id="GO:0009276">
    <property type="term" value="C:Gram-negative-bacterium-type cell wall"/>
    <property type="evidence" value="ECO:0007669"/>
    <property type="project" value="InterPro"/>
</dbReference>
<dbReference type="GO" id="GO:0005886">
    <property type="term" value="C:plasma membrane"/>
    <property type="evidence" value="ECO:0007669"/>
    <property type="project" value="UniProtKB-SubCell"/>
</dbReference>
<dbReference type="GO" id="GO:0016655">
    <property type="term" value="F:oxidoreductase activity, acting on NAD(P)H, quinone or similar compound as acceptor"/>
    <property type="evidence" value="ECO:0007669"/>
    <property type="project" value="UniProtKB-UniRule"/>
</dbReference>
<dbReference type="GO" id="GO:0022904">
    <property type="term" value="P:respiratory electron transport chain"/>
    <property type="evidence" value="ECO:0007669"/>
    <property type="project" value="InterPro"/>
</dbReference>
<dbReference type="GO" id="GO:0006814">
    <property type="term" value="P:sodium ion transport"/>
    <property type="evidence" value="ECO:0007669"/>
    <property type="project" value="UniProtKB-UniRule"/>
</dbReference>
<dbReference type="HAMAP" id="MF_00429">
    <property type="entry name" value="NqrE"/>
    <property type="match status" value="1"/>
</dbReference>
<dbReference type="InterPro" id="IPR003667">
    <property type="entry name" value="NqrDE/RnfAE"/>
</dbReference>
<dbReference type="InterPro" id="IPR050133">
    <property type="entry name" value="NqrDE/RnfAE_oxidrdctase"/>
</dbReference>
<dbReference type="InterPro" id="IPR010967">
    <property type="entry name" value="NqrE"/>
</dbReference>
<dbReference type="NCBIfam" id="TIGR01940">
    <property type="entry name" value="nqrE"/>
    <property type="match status" value="1"/>
</dbReference>
<dbReference type="PANTHER" id="PTHR30335">
    <property type="entry name" value="INTEGRAL MEMBRANE PROTEIN OF SOXR-REDUCING COMPLEX"/>
    <property type="match status" value="1"/>
</dbReference>
<dbReference type="PANTHER" id="PTHR30335:SF1">
    <property type="entry name" value="NA(+)-TRANSLOCATING NADH-QUINONE REDUCTASE SUBUNIT E"/>
    <property type="match status" value="1"/>
</dbReference>
<dbReference type="Pfam" id="PF02508">
    <property type="entry name" value="Rnf-Nqr"/>
    <property type="match status" value="1"/>
</dbReference>
<dbReference type="PIRSF" id="PIRSF006102">
    <property type="entry name" value="NQR_DE"/>
    <property type="match status" value="1"/>
</dbReference>
<keyword id="KW-0997">Cell inner membrane</keyword>
<keyword id="KW-1003">Cell membrane</keyword>
<keyword id="KW-0406">Ion transport</keyword>
<keyword id="KW-0472">Membrane</keyword>
<keyword id="KW-0520">NAD</keyword>
<keyword id="KW-0915">Sodium</keyword>
<keyword id="KW-0739">Sodium transport</keyword>
<keyword id="KW-1278">Translocase</keyword>
<keyword id="KW-0812">Transmembrane</keyword>
<keyword id="KW-1133">Transmembrane helix</keyword>
<keyword id="KW-0813">Transport</keyword>
<keyword id="KW-0830">Ubiquinone</keyword>
<proteinExistence type="inferred from homology"/>
<name>NQRE_HAEI8</name>
<accession>Q4QP20</accession>
<reference key="1">
    <citation type="journal article" date="2005" name="J. Bacteriol.">
        <title>Genomic sequence of an otitis media isolate of nontypeable Haemophilus influenzae: comparative study with H. influenzae serotype d, strain KW20.</title>
        <authorList>
            <person name="Harrison A."/>
            <person name="Dyer D.W."/>
            <person name="Gillaspy A."/>
            <person name="Ray W.C."/>
            <person name="Mungur R."/>
            <person name="Carson M.B."/>
            <person name="Zhong H."/>
            <person name="Gipson J."/>
            <person name="Gipson M."/>
            <person name="Johnson L.S."/>
            <person name="Lewis L."/>
            <person name="Bakaletz L.O."/>
            <person name="Munson R.S. Jr."/>
        </authorList>
    </citation>
    <scope>NUCLEOTIDE SEQUENCE [LARGE SCALE GENOMIC DNA]</scope>
    <source>
        <strain>86-028NP</strain>
    </source>
</reference>
<comment type="function">
    <text evidence="1">NQR complex catalyzes the reduction of ubiquinone-1 to ubiquinol by two successive reactions, coupled with the transport of Na(+) ions from the cytoplasm to the periplasm. NqrA to NqrE are probably involved in the second step, the conversion of ubisemiquinone to ubiquinol.</text>
</comment>
<comment type="catalytic activity">
    <reaction evidence="1">
        <text>a ubiquinone + n Na(+)(in) + NADH + H(+) = a ubiquinol + n Na(+)(out) + NAD(+)</text>
        <dbReference type="Rhea" id="RHEA:47748"/>
        <dbReference type="Rhea" id="RHEA-COMP:9565"/>
        <dbReference type="Rhea" id="RHEA-COMP:9566"/>
        <dbReference type="ChEBI" id="CHEBI:15378"/>
        <dbReference type="ChEBI" id="CHEBI:16389"/>
        <dbReference type="ChEBI" id="CHEBI:17976"/>
        <dbReference type="ChEBI" id="CHEBI:29101"/>
        <dbReference type="ChEBI" id="CHEBI:57540"/>
        <dbReference type="ChEBI" id="CHEBI:57945"/>
        <dbReference type="EC" id="7.2.1.1"/>
    </reaction>
</comment>
<comment type="subunit">
    <text evidence="1">Composed of six subunits; NqrA, NqrB, NqrC, NqrD, NqrE and NqrF.</text>
</comment>
<comment type="subcellular location">
    <subcellularLocation>
        <location evidence="1">Cell inner membrane</location>
        <topology evidence="1">Multi-pass membrane protein</topology>
    </subcellularLocation>
</comment>
<comment type="similarity">
    <text evidence="1">Belongs to the NqrDE/RnfAE family.</text>
</comment>
<evidence type="ECO:0000255" key="1">
    <source>
        <dbReference type="HAMAP-Rule" id="MF_00429"/>
    </source>
</evidence>
<feature type="chain" id="PRO_1000060191" description="Na(+)-translocating NADH-quinone reductase subunit E">
    <location>
        <begin position="1"/>
        <end position="198"/>
    </location>
</feature>
<feature type="transmembrane region" description="Helical" evidence="1">
    <location>
        <begin position="11"/>
        <end position="31"/>
    </location>
</feature>
<feature type="transmembrane region" description="Helical" evidence="1">
    <location>
        <begin position="35"/>
        <end position="55"/>
    </location>
</feature>
<feature type="transmembrane region" description="Helical" evidence="1">
    <location>
        <begin position="77"/>
        <end position="97"/>
    </location>
</feature>
<feature type="transmembrane region" description="Helical" evidence="1">
    <location>
        <begin position="110"/>
        <end position="130"/>
    </location>
</feature>
<feature type="transmembrane region" description="Helical" evidence="1">
    <location>
        <begin position="140"/>
        <end position="160"/>
    </location>
</feature>
<feature type="transmembrane region" description="Helical" evidence="1">
    <location>
        <begin position="176"/>
        <end position="196"/>
    </location>
</feature>
<sequence>MEHYISLFVKAVFIENMALSFFLGMCTFLAVSKKVSTAFGLGIAVTFVLGIAVPVNQLIYANVLKENALIEGVDLSFLNFITFIGVIAGLVQILEMVLDKFMPSLYNALGIFLPLIAVNCAIFGGVSFMVQRDYNFPESIVYGFGSGLGWMLAIVALAGLTEKMKYADIPAGLKGLGITFISVGLMALGFMSFSGIQL</sequence>
<gene>
    <name evidence="1" type="primary">nqrE</name>
    <name type="ordered locus">NTHI0258</name>
</gene>
<protein>
    <recommendedName>
        <fullName evidence="1">Na(+)-translocating NADH-quinone reductase subunit E</fullName>
        <shortName evidence="1">Na(+)-NQR subunit E</shortName>
        <shortName evidence="1">Na(+)-translocating NQR subunit E</shortName>
        <ecNumber evidence="1">7.2.1.1</ecNumber>
    </recommendedName>
    <alternativeName>
        <fullName evidence="1">NQR complex subunit E</fullName>
    </alternativeName>
    <alternativeName>
        <fullName evidence="1">NQR-1 subunit E</fullName>
    </alternativeName>
</protein>
<organism>
    <name type="scientific">Haemophilus influenzae (strain 86-028NP)</name>
    <dbReference type="NCBI Taxonomy" id="281310"/>
    <lineage>
        <taxon>Bacteria</taxon>
        <taxon>Pseudomonadati</taxon>
        <taxon>Pseudomonadota</taxon>
        <taxon>Gammaproteobacteria</taxon>
        <taxon>Pasteurellales</taxon>
        <taxon>Pasteurellaceae</taxon>
        <taxon>Haemophilus</taxon>
    </lineage>
</organism>